<comment type="function">
    <text evidence="1">Alpha-L-arabinofuranosidase involved in the degradation of arabinoxylan, a major component of plant hemicellulose. Acts only on small linear 1,5-alpha-linked L-arabinofuranosyl oligosaccharides (By similarity).</text>
</comment>
<comment type="catalytic activity">
    <reaction>
        <text>Hydrolysis of terminal non-reducing alpha-L-arabinofuranoside residues in alpha-L-arabinosides.</text>
        <dbReference type="EC" id="3.2.1.55"/>
    </reaction>
</comment>
<comment type="pathway">
    <text>Glycan metabolism; L-arabinan degradation.</text>
</comment>
<comment type="subcellular location">
    <subcellularLocation>
        <location evidence="1">Secreted</location>
    </subcellularLocation>
</comment>
<comment type="similarity">
    <text evidence="3">Belongs to the glycosyl hydrolase 51 family.</text>
</comment>
<dbReference type="EC" id="3.2.1.55"/>
<dbReference type="EMBL" id="AM269950">
    <property type="protein sequence ID" value="CAK43424.1"/>
    <property type="molecule type" value="Genomic_DNA"/>
</dbReference>
<dbReference type="RefSeq" id="XP_001388482.1">
    <property type="nucleotide sequence ID" value="XM_001388445.1"/>
</dbReference>
<dbReference type="SMR" id="A2Q7E0"/>
<dbReference type="CAZy" id="GH51">
    <property type="family name" value="Glycoside Hydrolase Family 51"/>
</dbReference>
<dbReference type="GlyCosmos" id="A2Q7E0">
    <property type="glycosylation" value="10 sites, No reported glycans"/>
</dbReference>
<dbReference type="EnsemblFungi" id="CAK43424">
    <property type="protein sequence ID" value="CAK43424"/>
    <property type="gene ID" value="An01g00330"/>
</dbReference>
<dbReference type="GeneID" id="4978177"/>
<dbReference type="KEGG" id="ang:An01g00330"/>
<dbReference type="VEuPathDB" id="FungiDB:An01g00330"/>
<dbReference type="HOGENOM" id="CLU_010060_1_1_1"/>
<dbReference type="UniPathway" id="UPA00667"/>
<dbReference type="Proteomes" id="UP000006706">
    <property type="component" value="Chromosome 2R"/>
</dbReference>
<dbReference type="GO" id="GO:0005576">
    <property type="term" value="C:extracellular region"/>
    <property type="evidence" value="ECO:0000314"/>
    <property type="project" value="AspGD"/>
</dbReference>
<dbReference type="GO" id="GO:0046556">
    <property type="term" value="F:alpha-L-arabinofuranosidase activity"/>
    <property type="evidence" value="ECO:0000314"/>
    <property type="project" value="AspGD"/>
</dbReference>
<dbReference type="GO" id="GO:0031222">
    <property type="term" value="P:arabinan catabolic process"/>
    <property type="evidence" value="ECO:0007669"/>
    <property type="project" value="UniProtKB-UniPathway"/>
</dbReference>
<dbReference type="GO" id="GO:0019566">
    <property type="term" value="P:arabinose metabolic process"/>
    <property type="evidence" value="ECO:0000250"/>
    <property type="project" value="UniProtKB"/>
</dbReference>
<dbReference type="GO" id="GO:2000895">
    <property type="term" value="P:hemicellulose catabolic process"/>
    <property type="evidence" value="ECO:0000314"/>
    <property type="project" value="AspGD"/>
</dbReference>
<dbReference type="GO" id="GO:0046373">
    <property type="term" value="P:L-arabinose metabolic process"/>
    <property type="evidence" value="ECO:0000314"/>
    <property type="project" value="AspGD"/>
</dbReference>
<dbReference type="FunFam" id="2.60.40.1180:FF:000036">
    <property type="entry name" value="Probable alpha-L-arabinofuranosidase A"/>
    <property type="match status" value="1"/>
</dbReference>
<dbReference type="FunFam" id="3.20.20.80:FF:000092">
    <property type="entry name" value="Probable alpha-L-arabinofuranosidase A"/>
    <property type="match status" value="1"/>
</dbReference>
<dbReference type="Gene3D" id="3.20.20.80">
    <property type="entry name" value="Glycosidases"/>
    <property type="match status" value="1"/>
</dbReference>
<dbReference type="Gene3D" id="2.60.40.1180">
    <property type="entry name" value="Golgi alpha-mannosidase II"/>
    <property type="match status" value="1"/>
</dbReference>
<dbReference type="InterPro" id="IPR010720">
    <property type="entry name" value="Alpha-L-AF_C"/>
</dbReference>
<dbReference type="InterPro" id="IPR055235">
    <property type="entry name" value="ASD1_cat"/>
</dbReference>
<dbReference type="InterPro" id="IPR013780">
    <property type="entry name" value="Glyco_hydro_b"/>
</dbReference>
<dbReference type="InterPro" id="IPR017853">
    <property type="entry name" value="Glycoside_hydrolase_SF"/>
</dbReference>
<dbReference type="InterPro" id="IPR051563">
    <property type="entry name" value="Glycosyl_Hydrolase_51"/>
</dbReference>
<dbReference type="PANTHER" id="PTHR31776">
    <property type="entry name" value="ALPHA-L-ARABINOFURANOSIDASE 1"/>
    <property type="match status" value="1"/>
</dbReference>
<dbReference type="PANTHER" id="PTHR31776:SF0">
    <property type="entry name" value="ALPHA-L-ARABINOFURANOSIDASE 1"/>
    <property type="match status" value="1"/>
</dbReference>
<dbReference type="Pfam" id="PF06964">
    <property type="entry name" value="Alpha-L-AF_C"/>
    <property type="match status" value="1"/>
</dbReference>
<dbReference type="Pfam" id="PF22848">
    <property type="entry name" value="ASD1_dom"/>
    <property type="match status" value="1"/>
</dbReference>
<dbReference type="SMART" id="SM00813">
    <property type="entry name" value="Alpha-L-AF_C"/>
    <property type="match status" value="1"/>
</dbReference>
<dbReference type="SUPFAM" id="SSF51445">
    <property type="entry name" value="(Trans)glycosidases"/>
    <property type="match status" value="1"/>
</dbReference>
<dbReference type="SUPFAM" id="SSF51011">
    <property type="entry name" value="Glycosyl hydrolase domain"/>
    <property type="match status" value="1"/>
</dbReference>
<accession>A2Q7E0</accession>
<proteinExistence type="inferred from homology"/>
<keyword id="KW-0119">Carbohydrate metabolism</keyword>
<keyword id="KW-0325">Glycoprotein</keyword>
<keyword id="KW-0326">Glycosidase</keyword>
<keyword id="KW-0378">Hydrolase</keyword>
<keyword id="KW-0624">Polysaccharide degradation</keyword>
<keyword id="KW-1185">Reference proteome</keyword>
<keyword id="KW-0964">Secreted</keyword>
<keyword id="KW-0732">Signal</keyword>
<organism>
    <name type="scientific">Aspergillus niger (strain ATCC MYA-4892 / CBS 513.88 / FGSC A1513)</name>
    <dbReference type="NCBI Taxonomy" id="425011"/>
    <lineage>
        <taxon>Eukaryota</taxon>
        <taxon>Fungi</taxon>
        <taxon>Dikarya</taxon>
        <taxon>Ascomycota</taxon>
        <taxon>Pezizomycotina</taxon>
        <taxon>Eurotiomycetes</taxon>
        <taxon>Eurotiomycetidae</taxon>
        <taxon>Eurotiales</taxon>
        <taxon>Aspergillaceae</taxon>
        <taxon>Aspergillus</taxon>
        <taxon>Aspergillus subgen. Circumdati</taxon>
    </lineage>
</organism>
<feature type="signal peptide" evidence="2">
    <location>
        <begin position="1"/>
        <end position="25"/>
    </location>
</feature>
<feature type="chain" id="PRO_5000219287" description="Probable alpha-L-arabinofuranosidase A">
    <location>
        <begin position="26"/>
        <end position="628"/>
    </location>
</feature>
<feature type="glycosylation site" description="N-linked (GlcNAc...) asparagine" evidence="2">
    <location>
        <position position="36"/>
    </location>
</feature>
<feature type="glycosylation site" description="N-linked (GlcNAc...) asparagine" evidence="2">
    <location>
        <position position="51"/>
    </location>
</feature>
<feature type="glycosylation site" description="N-linked (GlcNAc...) asparagine" evidence="2">
    <location>
        <position position="74"/>
    </location>
</feature>
<feature type="glycosylation site" description="N-linked (GlcNAc...) asparagine" evidence="2">
    <location>
        <position position="152"/>
    </location>
</feature>
<feature type="glycosylation site" description="N-linked (GlcNAc...) asparagine" evidence="2">
    <location>
        <position position="171"/>
    </location>
</feature>
<feature type="glycosylation site" description="N-linked (GlcNAc...) asparagine" evidence="2">
    <location>
        <position position="260"/>
    </location>
</feature>
<feature type="glycosylation site" description="N-linked (GlcNAc...) asparagine" evidence="2">
    <location>
        <position position="359"/>
    </location>
</feature>
<feature type="glycosylation site" description="N-linked (GlcNAc...) asparagine" evidence="2">
    <location>
        <position position="440"/>
    </location>
</feature>
<feature type="glycosylation site" description="N-linked (GlcNAc...) asparagine" evidence="2">
    <location>
        <position position="493"/>
    </location>
</feature>
<feature type="glycosylation site" description="N-linked (GlcNAc...) asparagine" evidence="2">
    <location>
        <position position="610"/>
    </location>
</feature>
<reference key="1">
    <citation type="journal article" date="2007" name="Nat. Biotechnol.">
        <title>Genome sequencing and analysis of the versatile cell factory Aspergillus niger CBS 513.88.</title>
        <authorList>
            <person name="Pel H.J."/>
            <person name="de Winde J.H."/>
            <person name="Archer D.B."/>
            <person name="Dyer P.S."/>
            <person name="Hofmann G."/>
            <person name="Schaap P.J."/>
            <person name="Turner G."/>
            <person name="de Vries R.P."/>
            <person name="Albang R."/>
            <person name="Albermann K."/>
            <person name="Andersen M.R."/>
            <person name="Bendtsen J.D."/>
            <person name="Benen J.A.E."/>
            <person name="van den Berg M."/>
            <person name="Breestraat S."/>
            <person name="Caddick M.X."/>
            <person name="Contreras R."/>
            <person name="Cornell M."/>
            <person name="Coutinho P.M."/>
            <person name="Danchin E.G.J."/>
            <person name="Debets A.J.M."/>
            <person name="Dekker P."/>
            <person name="van Dijck P.W.M."/>
            <person name="van Dijk A."/>
            <person name="Dijkhuizen L."/>
            <person name="Driessen A.J.M."/>
            <person name="d'Enfert C."/>
            <person name="Geysens S."/>
            <person name="Goosen C."/>
            <person name="Groot G.S.P."/>
            <person name="de Groot P.W.J."/>
            <person name="Guillemette T."/>
            <person name="Henrissat B."/>
            <person name="Herweijer M."/>
            <person name="van den Hombergh J.P.T.W."/>
            <person name="van den Hondel C.A.M.J.J."/>
            <person name="van der Heijden R.T.J.M."/>
            <person name="van der Kaaij R.M."/>
            <person name="Klis F.M."/>
            <person name="Kools H.J."/>
            <person name="Kubicek C.P."/>
            <person name="van Kuyk P.A."/>
            <person name="Lauber J."/>
            <person name="Lu X."/>
            <person name="van der Maarel M.J.E.C."/>
            <person name="Meulenberg R."/>
            <person name="Menke H."/>
            <person name="Mortimer M.A."/>
            <person name="Nielsen J."/>
            <person name="Oliver S.G."/>
            <person name="Olsthoorn M."/>
            <person name="Pal K."/>
            <person name="van Peij N.N.M.E."/>
            <person name="Ram A.F.J."/>
            <person name="Rinas U."/>
            <person name="Roubos J.A."/>
            <person name="Sagt C.M.J."/>
            <person name="Schmoll M."/>
            <person name="Sun J."/>
            <person name="Ussery D."/>
            <person name="Varga J."/>
            <person name="Vervecken W."/>
            <person name="van de Vondervoort P.J.J."/>
            <person name="Wedler H."/>
            <person name="Woesten H.A.B."/>
            <person name="Zeng A.-P."/>
            <person name="van Ooyen A.J.J."/>
            <person name="Visser J."/>
            <person name="Stam H."/>
        </authorList>
    </citation>
    <scope>NUCLEOTIDE SEQUENCE [LARGE SCALE GENOMIC DNA]</scope>
    <source>
        <strain>ATCC MYA-4892 / CBS 513.88 / FGSC A1513</strain>
    </source>
</reference>
<sequence>MVAFSALSGVSAVSLLLSLVQNAHGISLKVSTQGGNSSSPILYGFMFEDINHSGDGGIYGQMLQNPGLQGTAPNLTAWAAVGDATIAIDGDSPLTSAIPSTIKLNIADDATGAVGLTNEGYWGIPVDGSEFHSSFWIKGDYSGDITVRLVGNYTGTEYGSTTITHTSTADNFTQASVKFPTTKAPDGNVLYELTVDGSVAAGSSLNFGYLTLFGETYKSRENGLKPQLANVLDDMKGSFLRFPGGNNLEGNSAENRWKWNETIGDLWDRPGREGTWTYYNTDGLGLHEYFYWCEDLGLVPVLGVWDGFALESGGNTPLTGDALTPYIDDVLNELEYILGDTSTTYGAWRAANGQEEPWNLTMVEIGNEDMLGGGCESYAERFTAFYDAIHAAYPDLILIASTSEADCLPESMPEGSWVDYHDYSTPDGLVGQFNYFDNLNRSVPYFIGEYSRWEIDWPNMKGSVAEAVFMIGFERNSDVVKMAAYAPLLQLINSTQWTPDLIGYTQSPGDIFLSTSYYVQEMFSRNRGDTIKEVTSDSDFGPLYWVASSAGDSYYMKLANYGSETQDLTVSIPGTSTGKLTVLADSDPDAYNSDTQTLVTPSESTVQASNGTFTFSLPAWAVAVLAAN</sequence>
<evidence type="ECO:0000250" key="1"/>
<evidence type="ECO:0000255" key="2"/>
<evidence type="ECO:0000305" key="3"/>
<gene>
    <name type="primary">abfA</name>
    <name type="ORF">An01g00330</name>
</gene>
<protein>
    <recommendedName>
        <fullName>Probable alpha-L-arabinofuranosidase A</fullName>
        <shortName>ABF A</shortName>
        <shortName>Arabinosidase A</shortName>
        <ecNumber>3.2.1.55</ecNumber>
    </recommendedName>
</protein>
<name>ABFA_ASPNC</name>